<keyword id="KW-0967">Endosome</keyword>
<keyword id="KW-0325">Glycoprotein</keyword>
<keyword id="KW-0472">Membrane</keyword>
<keyword id="KW-0653">Protein transport</keyword>
<keyword id="KW-1185">Reference proteome</keyword>
<keyword id="KW-0735">Signal-anchor</keyword>
<keyword id="KW-0812">Transmembrane</keyword>
<keyword id="KW-1133">Transmembrane helix</keyword>
<keyword id="KW-0813">Transport</keyword>
<keyword id="KW-0926">Vacuole</keyword>
<feature type="chain" id="PRO_0000324483" description="Protein ssh4">
    <location>
        <begin position="1"/>
        <end position="507"/>
    </location>
</feature>
<feature type="topological domain" description="Cytoplasmic" evidence="2">
    <location>
        <begin position="1"/>
        <end position="82"/>
    </location>
</feature>
<feature type="transmembrane region" description="Helical; Signal-anchor for type II membrane protein" evidence="2">
    <location>
        <begin position="83"/>
        <end position="103"/>
    </location>
</feature>
<feature type="topological domain" description="Lumenal" evidence="2">
    <location>
        <begin position="104"/>
        <end position="507"/>
    </location>
</feature>
<feature type="domain" description="B30.2/SPRY" evidence="3">
    <location>
        <begin position="146"/>
        <end position="342"/>
    </location>
</feature>
<feature type="region of interest" description="Disordered" evidence="4">
    <location>
        <begin position="385"/>
        <end position="417"/>
    </location>
</feature>
<feature type="region of interest" description="Disordered" evidence="4">
    <location>
        <begin position="448"/>
        <end position="507"/>
    </location>
</feature>
<feature type="compositionally biased region" description="Polar residues" evidence="4">
    <location>
        <begin position="385"/>
        <end position="400"/>
    </location>
</feature>
<feature type="compositionally biased region" description="Low complexity" evidence="4">
    <location>
        <begin position="401"/>
        <end position="414"/>
    </location>
</feature>
<feature type="compositionally biased region" description="Polar residues" evidence="4">
    <location>
        <begin position="496"/>
        <end position="507"/>
    </location>
</feature>
<feature type="glycosylation site" description="N-linked (GlcNAc...) asparagine" evidence="2">
    <location>
        <position position="397"/>
    </location>
</feature>
<feature type="glycosylation site" description="N-linked (GlcNAc...) asparagine" evidence="2">
    <location>
        <position position="450"/>
    </location>
</feature>
<feature type="glycosylation site" description="N-linked (GlcNAc...) asparagine" evidence="2">
    <location>
        <position position="499"/>
    </location>
</feature>
<name>SSH4_NEOFI</name>
<evidence type="ECO:0000250" key="1"/>
<evidence type="ECO:0000255" key="2"/>
<evidence type="ECO:0000255" key="3">
    <source>
        <dbReference type="PROSITE-ProRule" id="PRU00548"/>
    </source>
</evidence>
<evidence type="ECO:0000256" key="4">
    <source>
        <dbReference type="SAM" id="MobiDB-lite"/>
    </source>
</evidence>
<evidence type="ECO:0000305" key="5"/>
<dbReference type="EMBL" id="DS027688">
    <property type="protein sequence ID" value="EAW22370.1"/>
    <property type="molecule type" value="Genomic_DNA"/>
</dbReference>
<dbReference type="RefSeq" id="XP_001264267.1">
    <property type="nucleotide sequence ID" value="XM_001264266.1"/>
</dbReference>
<dbReference type="SMR" id="A1D1S7"/>
<dbReference type="STRING" id="331117.A1D1S7"/>
<dbReference type="GlyCosmos" id="A1D1S7">
    <property type="glycosylation" value="3 sites, No reported glycans"/>
</dbReference>
<dbReference type="EnsemblFungi" id="EAW22370">
    <property type="protein sequence ID" value="EAW22370"/>
    <property type="gene ID" value="NFIA_010510"/>
</dbReference>
<dbReference type="GeneID" id="4592081"/>
<dbReference type="KEGG" id="nfi:NFIA_010510"/>
<dbReference type="VEuPathDB" id="FungiDB:NFIA_010510"/>
<dbReference type="eggNOG" id="KOG1477">
    <property type="taxonomic scope" value="Eukaryota"/>
</dbReference>
<dbReference type="HOGENOM" id="CLU_016552_1_1_1"/>
<dbReference type="OMA" id="FFFKYTR"/>
<dbReference type="OrthoDB" id="258495at2759"/>
<dbReference type="Proteomes" id="UP000006702">
    <property type="component" value="Unassembled WGS sequence"/>
</dbReference>
<dbReference type="GO" id="GO:0010008">
    <property type="term" value="C:endosome membrane"/>
    <property type="evidence" value="ECO:0007669"/>
    <property type="project" value="UniProtKB-SubCell"/>
</dbReference>
<dbReference type="GO" id="GO:0005774">
    <property type="term" value="C:vacuolar membrane"/>
    <property type="evidence" value="ECO:0007669"/>
    <property type="project" value="UniProtKB-SubCell"/>
</dbReference>
<dbReference type="GO" id="GO:0015031">
    <property type="term" value="P:protein transport"/>
    <property type="evidence" value="ECO:0007669"/>
    <property type="project" value="UniProtKB-KW"/>
</dbReference>
<dbReference type="CDD" id="cd12910">
    <property type="entry name" value="SPRY_SSH4_like"/>
    <property type="match status" value="1"/>
</dbReference>
<dbReference type="FunFam" id="2.60.120.920:FF:000065">
    <property type="entry name" value="Ear1p"/>
    <property type="match status" value="1"/>
</dbReference>
<dbReference type="Gene3D" id="2.60.120.920">
    <property type="match status" value="1"/>
</dbReference>
<dbReference type="InterPro" id="IPR001870">
    <property type="entry name" value="B30.2/SPRY"/>
</dbReference>
<dbReference type="InterPro" id="IPR043136">
    <property type="entry name" value="B30.2/SPRY_sf"/>
</dbReference>
<dbReference type="InterPro" id="IPR013320">
    <property type="entry name" value="ConA-like_dom_sf"/>
</dbReference>
<dbReference type="InterPro" id="IPR003877">
    <property type="entry name" value="SPRY_dom"/>
</dbReference>
<dbReference type="InterPro" id="IPR035780">
    <property type="entry name" value="SPRY_Ssh4-like"/>
</dbReference>
<dbReference type="InterPro" id="IPR050618">
    <property type="entry name" value="Ubq-SigPath_Reg"/>
</dbReference>
<dbReference type="PANTHER" id="PTHR12864">
    <property type="entry name" value="RAN BINDING PROTEIN 9-RELATED"/>
    <property type="match status" value="1"/>
</dbReference>
<dbReference type="Pfam" id="PF00622">
    <property type="entry name" value="SPRY"/>
    <property type="match status" value="1"/>
</dbReference>
<dbReference type="SMART" id="SM00449">
    <property type="entry name" value="SPRY"/>
    <property type="match status" value="1"/>
</dbReference>
<dbReference type="SUPFAM" id="SSF49899">
    <property type="entry name" value="Concanavalin A-like lectins/glucanases"/>
    <property type="match status" value="1"/>
</dbReference>
<dbReference type="PROSITE" id="PS50188">
    <property type="entry name" value="B302_SPRY"/>
    <property type="match status" value="1"/>
</dbReference>
<comment type="function">
    <text evidence="1">Components of the endosome-vacuole trafficking pathway that regulates nutrient transport. May be involved in processes which determine whether plasma membrane proteins are degraded or routed to the plasma membrane (By similarity).</text>
</comment>
<comment type="subcellular location">
    <subcellularLocation>
        <location evidence="1">Vacuole membrane</location>
        <topology evidence="1">Single-pass type II membrane protein</topology>
    </subcellularLocation>
    <subcellularLocation>
        <location evidence="1">Endosome membrane</location>
        <topology evidence="1">Single-pass type II membrane protein</topology>
    </subcellularLocation>
</comment>
<comment type="similarity">
    <text evidence="5">Belongs to the SSH4 family.</text>
</comment>
<protein>
    <recommendedName>
        <fullName>Protein ssh4</fullName>
    </recommendedName>
</protein>
<sequence length="507" mass="54641">MRGSEASGPGAIFGAPSTLTTSVIRNPTSFLSSSTPLPSTDADVVAQNVEHVLLSLTSHNDGGLVGVSGNSSGSTGKGILIGVLSAFGSATVAVLVLAIFFFFKYTRRGRIFLDRIGRPGEFDDEQAFAREEAEALEVMDDMSRSEYMRAKSFVEANPPESMQTDISLSQFLAIQEKGVSAWEFQPELEIANCFVEGRTEIEFYDSECSVQTNLPVPKQNDVYYWEAKIYEKPESTHISIGMTTKPYPLFRLPGFHKTSVAYLSTGHRRYNQPFSATPYGPPLAQGDVVGVGYRPRSGTIFFTRNGKKLEDVVHGAKTQNFFPTVGANGPCTVHVNFGQMGFVFIEANVKKWGLAPMTGSLAPPPPYGSEQGSILLESGRESAAQISQRVYQDARTNSTVRIPPSRSPGPVRSPTDISLAPLAHIPSHEDVGEGSSHANTIADEQTPLLNTSDLDQVPPPEYSSPDGSRRGSDITGDLPNQNSPPIPSYDAAVGNQADNTSTPDGDH</sequence>
<organism>
    <name type="scientific">Neosartorya fischeri (strain ATCC 1020 / DSM 3700 / CBS 544.65 / FGSC A1164 / JCM 1740 / NRRL 181 / WB 181)</name>
    <name type="common">Aspergillus fischerianus</name>
    <dbReference type="NCBI Taxonomy" id="331117"/>
    <lineage>
        <taxon>Eukaryota</taxon>
        <taxon>Fungi</taxon>
        <taxon>Dikarya</taxon>
        <taxon>Ascomycota</taxon>
        <taxon>Pezizomycotina</taxon>
        <taxon>Eurotiomycetes</taxon>
        <taxon>Eurotiomycetidae</taxon>
        <taxon>Eurotiales</taxon>
        <taxon>Aspergillaceae</taxon>
        <taxon>Aspergillus</taxon>
        <taxon>Aspergillus subgen. Fumigati</taxon>
    </lineage>
</organism>
<reference key="1">
    <citation type="journal article" date="2008" name="PLoS Genet.">
        <title>Genomic islands in the pathogenic filamentous fungus Aspergillus fumigatus.</title>
        <authorList>
            <person name="Fedorova N.D."/>
            <person name="Khaldi N."/>
            <person name="Joardar V.S."/>
            <person name="Maiti R."/>
            <person name="Amedeo P."/>
            <person name="Anderson M.J."/>
            <person name="Crabtree J."/>
            <person name="Silva J.C."/>
            <person name="Badger J.H."/>
            <person name="Albarraq A."/>
            <person name="Angiuoli S."/>
            <person name="Bussey H."/>
            <person name="Bowyer P."/>
            <person name="Cotty P.J."/>
            <person name="Dyer P.S."/>
            <person name="Egan A."/>
            <person name="Galens K."/>
            <person name="Fraser-Liggett C.M."/>
            <person name="Haas B.J."/>
            <person name="Inman J.M."/>
            <person name="Kent R."/>
            <person name="Lemieux S."/>
            <person name="Malavazi I."/>
            <person name="Orvis J."/>
            <person name="Roemer T."/>
            <person name="Ronning C.M."/>
            <person name="Sundaram J.P."/>
            <person name="Sutton G."/>
            <person name="Turner G."/>
            <person name="Venter J.C."/>
            <person name="White O.R."/>
            <person name="Whitty B.R."/>
            <person name="Youngman P."/>
            <person name="Wolfe K.H."/>
            <person name="Goldman G.H."/>
            <person name="Wortman J.R."/>
            <person name="Jiang B."/>
            <person name="Denning D.W."/>
            <person name="Nierman W.C."/>
        </authorList>
    </citation>
    <scope>NUCLEOTIDE SEQUENCE [LARGE SCALE GENOMIC DNA]</scope>
    <source>
        <strain>ATCC 1020 / DSM 3700 / CBS 544.65 / FGSC A1164 / JCM 1740 / NRRL 181 / WB 181</strain>
    </source>
</reference>
<gene>
    <name type="primary">ssh4</name>
    <name type="ORF">NFIA_010510</name>
</gene>
<accession>A1D1S7</accession>
<proteinExistence type="inferred from homology"/>